<name>DDX54_DICDI</name>
<evidence type="ECO:0000250" key="1"/>
<evidence type="ECO:0000255" key="2">
    <source>
        <dbReference type="PROSITE-ProRule" id="PRU00541"/>
    </source>
</evidence>
<evidence type="ECO:0000255" key="3">
    <source>
        <dbReference type="PROSITE-ProRule" id="PRU00542"/>
    </source>
</evidence>
<evidence type="ECO:0000256" key="4">
    <source>
        <dbReference type="SAM" id="MobiDB-lite"/>
    </source>
</evidence>
<evidence type="ECO:0000305" key="5"/>
<dbReference type="EC" id="3.6.4.13"/>
<dbReference type="EMBL" id="AAFI02000199">
    <property type="protein sequence ID" value="EAL60848.1"/>
    <property type="molecule type" value="Genomic_DNA"/>
</dbReference>
<dbReference type="EMBL" id="X81822">
    <property type="protein sequence ID" value="CAA57416.1"/>
    <property type="molecule type" value="Genomic_DNA"/>
</dbReference>
<dbReference type="RefSeq" id="XP_629281.1">
    <property type="nucleotide sequence ID" value="XM_629279.1"/>
</dbReference>
<dbReference type="SMR" id="Q54CD8"/>
<dbReference type="FunCoup" id="Q54CD8">
    <property type="interactions" value="913"/>
</dbReference>
<dbReference type="STRING" id="44689.Q54CD8"/>
<dbReference type="PaxDb" id="44689-DDB0215372"/>
<dbReference type="EnsemblProtists" id="EAL60848">
    <property type="protein sequence ID" value="EAL60848"/>
    <property type="gene ID" value="DDB_G0292992"/>
</dbReference>
<dbReference type="GeneID" id="8629004"/>
<dbReference type="KEGG" id="ddi:DDB_G0292992"/>
<dbReference type="dictyBase" id="DDB_G0292992">
    <property type="gene designation" value="helA"/>
</dbReference>
<dbReference type="VEuPathDB" id="AmoebaDB:DDB_G0292992"/>
<dbReference type="eggNOG" id="KOG0337">
    <property type="taxonomic scope" value="Eukaryota"/>
</dbReference>
<dbReference type="HOGENOM" id="CLU_003041_5_2_1"/>
<dbReference type="InParanoid" id="Q54CD8"/>
<dbReference type="OMA" id="EDQFGMM"/>
<dbReference type="PhylomeDB" id="Q54CD8"/>
<dbReference type="PRO" id="PR:Q54CD8"/>
<dbReference type="Proteomes" id="UP000002195">
    <property type="component" value="Chromosome 6"/>
</dbReference>
<dbReference type="GO" id="GO:0005730">
    <property type="term" value="C:nucleolus"/>
    <property type="evidence" value="ECO:0000318"/>
    <property type="project" value="GO_Central"/>
</dbReference>
<dbReference type="GO" id="GO:0005524">
    <property type="term" value="F:ATP binding"/>
    <property type="evidence" value="ECO:0007669"/>
    <property type="project" value="UniProtKB-KW"/>
</dbReference>
<dbReference type="GO" id="GO:0016887">
    <property type="term" value="F:ATP hydrolysis activity"/>
    <property type="evidence" value="ECO:0007669"/>
    <property type="project" value="RHEA"/>
</dbReference>
<dbReference type="GO" id="GO:0003723">
    <property type="term" value="F:RNA binding"/>
    <property type="evidence" value="ECO:0007669"/>
    <property type="project" value="UniProtKB-KW"/>
</dbReference>
<dbReference type="GO" id="GO:0003724">
    <property type="term" value="F:RNA helicase activity"/>
    <property type="evidence" value="ECO:0007669"/>
    <property type="project" value="UniProtKB-EC"/>
</dbReference>
<dbReference type="GO" id="GO:0006364">
    <property type="term" value="P:rRNA processing"/>
    <property type="evidence" value="ECO:0000318"/>
    <property type="project" value="GO_Central"/>
</dbReference>
<dbReference type="CDD" id="cd17959">
    <property type="entry name" value="DEADc_DDX54"/>
    <property type="match status" value="1"/>
</dbReference>
<dbReference type="CDD" id="cd18787">
    <property type="entry name" value="SF2_C_DEAD"/>
    <property type="match status" value="1"/>
</dbReference>
<dbReference type="Gene3D" id="3.40.50.300">
    <property type="entry name" value="P-loop containing nucleotide triphosphate hydrolases"/>
    <property type="match status" value="2"/>
</dbReference>
<dbReference type="InterPro" id="IPR012541">
    <property type="entry name" value="DBP10_C"/>
</dbReference>
<dbReference type="InterPro" id="IPR033517">
    <property type="entry name" value="DDX54/DBP10_DEAD-box_helicase"/>
</dbReference>
<dbReference type="InterPro" id="IPR011545">
    <property type="entry name" value="DEAD/DEAH_box_helicase_dom"/>
</dbReference>
<dbReference type="InterPro" id="IPR050079">
    <property type="entry name" value="DEAD_box_RNA_helicase"/>
</dbReference>
<dbReference type="InterPro" id="IPR014001">
    <property type="entry name" value="Helicase_ATP-bd"/>
</dbReference>
<dbReference type="InterPro" id="IPR001650">
    <property type="entry name" value="Helicase_C-like"/>
</dbReference>
<dbReference type="InterPro" id="IPR027417">
    <property type="entry name" value="P-loop_NTPase"/>
</dbReference>
<dbReference type="InterPro" id="IPR000629">
    <property type="entry name" value="RNA-helicase_DEAD-box_CS"/>
</dbReference>
<dbReference type="InterPro" id="IPR014014">
    <property type="entry name" value="RNA_helicase_DEAD_Q_motif"/>
</dbReference>
<dbReference type="PANTHER" id="PTHR47959">
    <property type="entry name" value="ATP-DEPENDENT RNA HELICASE RHLE-RELATED"/>
    <property type="match status" value="1"/>
</dbReference>
<dbReference type="PANTHER" id="PTHR47959:SF8">
    <property type="entry name" value="RNA HELICASE"/>
    <property type="match status" value="1"/>
</dbReference>
<dbReference type="Pfam" id="PF08147">
    <property type="entry name" value="DBP10CT"/>
    <property type="match status" value="1"/>
</dbReference>
<dbReference type="Pfam" id="PF00270">
    <property type="entry name" value="DEAD"/>
    <property type="match status" value="1"/>
</dbReference>
<dbReference type="Pfam" id="PF00271">
    <property type="entry name" value="Helicase_C"/>
    <property type="match status" value="1"/>
</dbReference>
<dbReference type="SMART" id="SM01123">
    <property type="entry name" value="DBP10CT"/>
    <property type="match status" value="1"/>
</dbReference>
<dbReference type="SMART" id="SM00487">
    <property type="entry name" value="DEXDc"/>
    <property type="match status" value="1"/>
</dbReference>
<dbReference type="SMART" id="SM00490">
    <property type="entry name" value="HELICc"/>
    <property type="match status" value="1"/>
</dbReference>
<dbReference type="SUPFAM" id="SSF52540">
    <property type="entry name" value="P-loop containing nucleoside triphosphate hydrolases"/>
    <property type="match status" value="2"/>
</dbReference>
<dbReference type="PROSITE" id="PS00039">
    <property type="entry name" value="DEAD_ATP_HELICASE"/>
    <property type="match status" value="1"/>
</dbReference>
<dbReference type="PROSITE" id="PS51192">
    <property type="entry name" value="HELICASE_ATP_BIND_1"/>
    <property type="match status" value="1"/>
</dbReference>
<dbReference type="PROSITE" id="PS51194">
    <property type="entry name" value="HELICASE_CTER"/>
    <property type="match status" value="1"/>
</dbReference>
<dbReference type="PROSITE" id="PS51195">
    <property type="entry name" value="Q_MOTIF"/>
    <property type="match status" value="1"/>
</dbReference>
<feature type="chain" id="PRO_0000327438" description="ATP-dependent RNA helicase ddx54">
    <location>
        <begin position="1"/>
        <end position="1091"/>
    </location>
</feature>
<feature type="domain" description="Helicase ATP-binding" evidence="2">
    <location>
        <begin position="261"/>
        <end position="433"/>
    </location>
</feature>
<feature type="domain" description="Helicase C-terminal" evidence="3">
    <location>
        <begin position="478"/>
        <end position="632"/>
    </location>
</feature>
<feature type="region of interest" description="Disordered" evidence="4">
    <location>
        <begin position="1"/>
        <end position="63"/>
    </location>
</feature>
<feature type="region of interest" description="Disordered" evidence="4">
    <location>
        <begin position="150"/>
        <end position="231"/>
    </location>
</feature>
<feature type="region of interest" description="Disordered" evidence="4">
    <location>
        <begin position="801"/>
        <end position="896"/>
    </location>
</feature>
<feature type="region of interest" description="Disordered" evidence="4">
    <location>
        <begin position="933"/>
        <end position="1091"/>
    </location>
</feature>
<feature type="short sequence motif" description="Q motif">
    <location>
        <begin position="230"/>
        <end position="258"/>
    </location>
</feature>
<feature type="short sequence motif" description="DEAD box">
    <location>
        <begin position="381"/>
        <end position="384"/>
    </location>
</feature>
<feature type="compositionally biased region" description="Basic and acidic residues" evidence="4">
    <location>
        <begin position="26"/>
        <end position="35"/>
    </location>
</feature>
<feature type="compositionally biased region" description="Polar residues" evidence="4">
    <location>
        <begin position="150"/>
        <end position="161"/>
    </location>
</feature>
<feature type="compositionally biased region" description="Basic and acidic residues" evidence="4">
    <location>
        <begin position="196"/>
        <end position="207"/>
    </location>
</feature>
<feature type="compositionally biased region" description="Basic and acidic residues" evidence="4">
    <location>
        <begin position="814"/>
        <end position="823"/>
    </location>
</feature>
<feature type="compositionally biased region" description="Acidic residues" evidence="4">
    <location>
        <begin position="824"/>
        <end position="855"/>
    </location>
</feature>
<feature type="compositionally biased region" description="Basic and acidic residues" evidence="4">
    <location>
        <begin position="865"/>
        <end position="874"/>
    </location>
</feature>
<feature type="compositionally biased region" description="Basic and acidic residues" evidence="4">
    <location>
        <begin position="944"/>
        <end position="975"/>
    </location>
</feature>
<feature type="compositionally biased region" description="Basic and acidic residues" evidence="4">
    <location>
        <begin position="1008"/>
        <end position="1019"/>
    </location>
</feature>
<feature type="compositionally biased region" description="Basic residues" evidence="4">
    <location>
        <begin position="1020"/>
        <end position="1029"/>
    </location>
</feature>
<feature type="compositionally biased region" description="Basic and acidic residues" evidence="4">
    <location>
        <begin position="1031"/>
        <end position="1052"/>
    </location>
</feature>
<feature type="compositionally biased region" description="Gly residues" evidence="4">
    <location>
        <begin position="1068"/>
        <end position="1079"/>
    </location>
</feature>
<feature type="binding site" evidence="2">
    <location>
        <begin position="274"/>
        <end position="281"/>
    </location>
    <ligand>
        <name>ATP</name>
        <dbReference type="ChEBI" id="CHEBI:30616"/>
    </ligand>
</feature>
<feature type="sequence conflict" description="In Ref. 2; CAA57416." evidence="5" ref="2">
    <original>FT</original>
    <variation>LH</variation>
    <location>
        <begin position="344"/>
        <end position="345"/>
    </location>
</feature>
<feature type="sequence conflict" description="In Ref. 2; CAA57416." evidence="5" ref="2">
    <original>N</original>
    <variation>Y</variation>
    <location>
        <position position="350"/>
    </location>
</feature>
<feature type="sequence conflict" description="In Ref. 2; CAA57416." evidence="5" ref="2">
    <original>I</original>
    <variation>L</variation>
    <location>
        <position position="355"/>
    </location>
</feature>
<protein>
    <recommendedName>
        <fullName>ATP-dependent RNA helicase ddx54</fullName>
        <ecNumber>3.6.4.13</ecNumber>
    </recommendedName>
    <alternativeName>
        <fullName>ATP-dependent RNA helicase helA</fullName>
    </alternativeName>
    <alternativeName>
        <fullName>DEAD box protein 54</fullName>
    </alternativeName>
</protein>
<sequence length="1091" mass="125085">MVKPNNVKIKNKGNLKKSNESQNDYMKGKKLETKSYQKALLSKNSNNNNDGAQAKRLKKKEEFKKKLEKRQNTIVIKDKLKEPSTFLKEDQSFFDQNIFNDQDDYKHQQMNRININENFETNLFGDMMNEFDGDLNEDLDLLDYNDEVIDNSNFDNNGDQFNSEDEEFYDDEKQAKKSNKNKNADADNKKSKKSNKKEEIESSEKFESFPMDENNEQEEETTSKKKKKTGGFQSMDLTKNLLKAILKKGFNVPTPIQRKSIPMILDGHDIVGMARTGSGKTGAFVIPMIQKLGDHSTTVGVRAVILSPTRELAIQTFKVVKDFSQGTQLRTILIVGGDSMEDQFTDLARNPDIIIATPGRLMHHLLETGMSLSKVQYIVFDEADRLFEMGFNEQLTEILSKLSENRQTLLFSATLPSLLVDFVRAGLNNPKLINLDTDTKISENLSLSFFTLRHEEKLGVLLFLLKDIIYKKPQLPTTETTTTTTTNNESNQQQQKKSSTIIFVSTKYHVEFIHILLERAGIASTYIHGYLDPVARKINLAKFRSHQVGVMVVTDLAARGIDIPLLDNVINFDFPPKEKIFIHRVGRVARAGRSGIAYSLVSPDEVPYMIDLHLYLGRKFLNKFQYEGQTINDPKYSFYGTIPQTIIDRETEFVNVQRKECIELLSLTKTIHNAHKKYLSTRPGASHESNRRAKLMDKSKYHPMLSDHLNSNDQIRNDFIQSLKSFRPPQTVLELDARKNNVQVSIMKDKRKVHTNVIESQQKKLYLQQSETNLGPENEEFDYSKLDTRKRLLQLTENITEEMLRSNKSNDNNDNNKDIKMNENDDENDDDDEEGENDDDEEEENEKDEDDEEDENKNKFNIKIESSDKNDNNKKKLKSRSSSRDPNFFISATPENLIQERAMSISNRFTKDDEVNLVADTDRKQKKSMVWDKRKGKFVSSQADADRKNSKKLVRNEAGKLVEAKKSHKGYEEWKKKTHGRIQRVGEDENSKYQPNQKEYLPQKWRGQGREKEKKDNKASHAKGSHGLKGRPSELKDKNQISKNRSEKERKMRVNKTKGNPKGSKSKSGGGGGGKGSKFGSGKSKGGKSRK</sequence>
<reference key="1">
    <citation type="journal article" date="2005" name="Nature">
        <title>The genome of the social amoeba Dictyostelium discoideum.</title>
        <authorList>
            <person name="Eichinger L."/>
            <person name="Pachebat J.A."/>
            <person name="Gloeckner G."/>
            <person name="Rajandream M.A."/>
            <person name="Sucgang R."/>
            <person name="Berriman M."/>
            <person name="Song J."/>
            <person name="Olsen R."/>
            <person name="Szafranski K."/>
            <person name="Xu Q."/>
            <person name="Tunggal B."/>
            <person name="Kummerfeld S."/>
            <person name="Madera M."/>
            <person name="Konfortov B.A."/>
            <person name="Rivero F."/>
            <person name="Bankier A.T."/>
            <person name="Lehmann R."/>
            <person name="Hamlin N."/>
            <person name="Davies R."/>
            <person name="Gaudet P."/>
            <person name="Fey P."/>
            <person name="Pilcher K."/>
            <person name="Chen G."/>
            <person name="Saunders D."/>
            <person name="Sodergren E.J."/>
            <person name="Davis P."/>
            <person name="Kerhornou A."/>
            <person name="Nie X."/>
            <person name="Hall N."/>
            <person name="Anjard C."/>
            <person name="Hemphill L."/>
            <person name="Bason N."/>
            <person name="Farbrother P."/>
            <person name="Desany B."/>
            <person name="Just E."/>
            <person name="Morio T."/>
            <person name="Rost R."/>
            <person name="Churcher C.M."/>
            <person name="Cooper J."/>
            <person name="Haydock S."/>
            <person name="van Driessche N."/>
            <person name="Cronin A."/>
            <person name="Goodhead I."/>
            <person name="Muzny D.M."/>
            <person name="Mourier T."/>
            <person name="Pain A."/>
            <person name="Lu M."/>
            <person name="Harper D."/>
            <person name="Lindsay R."/>
            <person name="Hauser H."/>
            <person name="James K.D."/>
            <person name="Quiles M."/>
            <person name="Madan Babu M."/>
            <person name="Saito T."/>
            <person name="Buchrieser C."/>
            <person name="Wardroper A."/>
            <person name="Felder M."/>
            <person name="Thangavelu M."/>
            <person name="Johnson D."/>
            <person name="Knights A."/>
            <person name="Loulseged H."/>
            <person name="Mungall K.L."/>
            <person name="Oliver K."/>
            <person name="Price C."/>
            <person name="Quail M.A."/>
            <person name="Urushihara H."/>
            <person name="Hernandez J."/>
            <person name="Rabbinowitsch E."/>
            <person name="Steffen D."/>
            <person name="Sanders M."/>
            <person name="Ma J."/>
            <person name="Kohara Y."/>
            <person name="Sharp S."/>
            <person name="Simmonds M.N."/>
            <person name="Spiegler S."/>
            <person name="Tivey A."/>
            <person name="Sugano S."/>
            <person name="White B."/>
            <person name="Walker D."/>
            <person name="Woodward J.R."/>
            <person name="Winckler T."/>
            <person name="Tanaka Y."/>
            <person name="Shaulsky G."/>
            <person name="Schleicher M."/>
            <person name="Weinstock G.M."/>
            <person name="Rosenthal A."/>
            <person name="Cox E.C."/>
            <person name="Chisholm R.L."/>
            <person name="Gibbs R.A."/>
            <person name="Loomis W.F."/>
            <person name="Platzer M."/>
            <person name="Kay R.R."/>
            <person name="Williams J.G."/>
            <person name="Dear P.H."/>
            <person name="Noegel A.A."/>
            <person name="Barrell B.G."/>
            <person name="Kuspa A."/>
        </authorList>
    </citation>
    <scope>NUCLEOTIDE SEQUENCE [LARGE SCALE GENOMIC DNA]</scope>
    <source>
        <strain>AX4</strain>
    </source>
</reference>
<reference key="2">
    <citation type="journal article" date="1994" name="Biol. Chem. Hoppe-Seyler">
        <title>Developmental regulation of DEAD box proteins and cloning of putative RNA helicase genes from Dictyostelium discoideum.</title>
        <authorList>
            <person name="Mahal B."/>
            <person name="Nellen W."/>
        </authorList>
    </citation>
    <scope>NUCLEOTIDE SEQUENCE [GENOMIC DNA] OF 277-374</scope>
    <source>
        <strain>AX2</strain>
    </source>
</reference>
<comment type="function">
    <text evidence="1">ATP-binding RNA helicase which may be involved in the ribosome biogenesis.</text>
</comment>
<comment type="catalytic activity">
    <reaction>
        <text>ATP + H2O = ADP + phosphate + H(+)</text>
        <dbReference type="Rhea" id="RHEA:13065"/>
        <dbReference type="ChEBI" id="CHEBI:15377"/>
        <dbReference type="ChEBI" id="CHEBI:15378"/>
        <dbReference type="ChEBI" id="CHEBI:30616"/>
        <dbReference type="ChEBI" id="CHEBI:43474"/>
        <dbReference type="ChEBI" id="CHEBI:456216"/>
        <dbReference type="EC" id="3.6.4.13"/>
    </reaction>
</comment>
<comment type="subcellular location">
    <subcellularLocation>
        <location evidence="1">Nucleus</location>
        <location evidence="1">Nucleolus</location>
    </subcellularLocation>
</comment>
<comment type="domain">
    <text>The Q motif is unique to and characteristic of the DEAD box family of RNA helicases and controls ATP binding and hydrolysis.</text>
</comment>
<comment type="similarity">
    <text evidence="5">Belongs to the DEAD box helicase family. DDX54/DBP10 subfamily.</text>
</comment>
<keyword id="KW-0067">ATP-binding</keyword>
<keyword id="KW-0347">Helicase</keyword>
<keyword id="KW-0378">Hydrolase</keyword>
<keyword id="KW-0547">Nucleotide-binding</keyword>
<keyword id="KW-0539">Nucleus</keyword>
<keyword id="KW-1185">Reference proteome</keyword>
<keyword id="KW-0690">Ribosome biogenesis</keyword>
<keyword id="KW-0694">RNA-binding</keyword>
<keyword id="KW-0698">rRNA processing</keyword>
<accession>Q54CD8</accession>
<accession>Q23908</accession>
<proteinExistence type="inferred from homology"/>
<organism>
    <name type="scientific">Dictyostelium discoideum</name>
    <name type="common">Social amoeba</name>
    <dbReference type="NCBI Taxonomy" id="44689"/>
    <lineage>
        <taxon>Eukaryota</taxon>
        <taxon>Amoebozoa</taxon>
        <taxon>Evosea</taxon>
        <taxon>Eumycetozoa</taxon>
        <taxon>Dictyostelia</taxon>
        <taxon>Dictyosteliales</taxon>
        <taxon>Dictyosteliaceae</taxon>
        <taxon>Dictyostelium</taxon>
    </lineage>
</organism>
<gene>
    <name type="primary">helA</name>
    <name type="synonym">ddx54</name>
    <name type="ORF">DDB_G0292992</name>
</gene>